<organism>
    <name type="scientific">Acidovorax sp. (strain JS42)</name>
    <dbReference type="NCBI Taxonomy" id="232721"/>
    <lineage>
        <taxon>Bacteria</taxon>
        <taxon>Pseudomonadati</taxon>
        <taxon>Pseudomonadota</taxon>
        <taxon>Betaproteobacteria</taxon>
        <taxon>Burkholderiales</taxon>
        <taxon>Comamonadaceae</taxon>
        <taxon>Acidovorax</taxon>
    </lineage>
</organism>
<reference key="1">
    <citation type="submission" date="2006-12" db="EMBL/GenBank/DDBJ databases">
        <title>Complete sequence of chromosome 1 of Acidovorax sp. JS42.</title>
        <authorList>
            <person name="Copeland A."/>
            <person name="Lucas S."/>
            <person name="Lapidus A."/>
            <person name="Barry K."/>
            <person name="Detter J.C."/>
            <person name="Glavina del Rio T."/>
            <person name="Dalin E."/>
            <person name="Tice H."/>
            <person name="Pitluck S."/>
            <person name="Chertkov O."/>
            <person name="Brettin T."/>
            <person name="Bruce D."/>
            <person name="Han C."/>
            <person name="Tapia R."/>
            <person name="Gilna P."/>
            <person name="Schmutz J."/>
            <person name="Larimer F."/>
            <person name="Land M."/>
            <person name="Hauser L."/>
            <person name="Kyrpides N."/>
            <person name="Kim E."/>
            <person name="Stahl D."/>
            <person name="Richardson P."/>
        </authorList>
    </citation>
    <scope>NUCLEOTIDE SEQUENCE [LARGE SCALE GENOMIC DNA]</scope>
    <source>
        <strain>JS42</strain>
    </source>
</reference>
<keyword id="KW-0274">FAD</keyword>
<keyword id="KW-0285">Flavoprotein</keyword>
<keyword id="KW-0521">NADP</keyword>
<keyword id="KW-0560">Oxidoreductase</keyword>
<proteinExistence type="inferred from homology"/>
<accession>A1W6V2</accession>
<comment type="catalytic activity">
    <reaction evidence="1">
        <text>2 reduced [2Fe-2S]-[ferredoxin] + NADP(+) + H(+) = 2 oxidized [2Fe-2S]-[ferredoxin] + NADPH</text>
        <dbReference type="Rhea" id="RHEA:20125"/>
        <dbReference type="Rhea" id="RHEA-COMP:10000"/>
        <dbReference type="Rhea" id="RHEA-COMP:10001"/>
        <dbReference type="ChEBI" id="CHEBI:15378"/>
        <dbReference type="ChEBI" id="CHEBI:33737"/>
        <dbReference type="ChEBI" id="CHEBI:33738"/>
        <dbReference type="ChEBI" id="CHEBI:57783"/>
        <dbReference type="ChEBI" id="CHEBI:58349"/>
        <dbReference type="EC" id="1.18.1.2"/>
    </reaction>
</comment>
<comment type="cofactor">
    <cofactor evidence="1">
        <name>FAD</name>
        <dbReference type="ChEBI" id="CHEBI:57692"/>
    </cofactor>
    <text evidence="1">Binds 1 FAD per subunit.</text>
</comment>
<comment type="subunit">
    <text evidence="1">Homodimer.</text>
</comment>
<comment type="similarity">
    <text evidence="1">Belongs to the ferredoxin--NADP reductase type 2 family.</text>
</comment>
<gene>
    <name type="ordered locus">Ajs_1789</name>
</gene>
<sequence>MHPSPSSPTPQAADAVVIGAGPVGLFQVFQLGLQGIAAHLVDALPHVGGQCAELYPDKPIYDIPGIPVCTGLGLVELLQRQIAPFAPTLHLGQQIHALAAQADGRILLTTTAGTALLARSVFIAAGVGAFVPRAIKAEGVEALAPGQLLYHPDAATATRAATGKRVVVHGGDEAAVQAALDCVDAAAQVLLLHRRDAFQAAPAPLAQLQALREAGRIQVVIGQITGVETAPDGTLQALALLDPQGQPQRQPLDLLLAYLGISPRLGPIADWGLAMDRKQLAVDTATFATSVPGIYAVGDINTYPGKRKLILCGFHEATLAAFAEAERQAGHKLPLEYTTSSERLQARLGVAPAR</sequence>
<evidence type="ECO:0000255" key="1">
    <source>
        <dbReference type="HAMAP-Rule" id="MF_01685"/>
    </source>
</evidence>
<dbReference type="EC" id="1.18.1.2" evidence="1"/>
<dbReference type="EMBL" id="CP000539">
    <property type="protein sequence ID" value="ABM41977.1"/>
    <property type="molecule type" value="Genomic_DNA"/>
</dbReference>
<dbReference type="SMR" id="A1W6V2"/>
<dbReference type="STRING" id="232721.Ajs_1789"/>
<dbReference type="KEGG" id="ajs:Ajs_1789"/>
<dbReference type="eggNOG" id="COG0492">
    <property type="taxonomic scope" value="Bacteria"/>
</dbReference>
<dbReference type="HOGENOM" id="CLU_031864_5_5_4"/>
<dbReference type="Proteomes" id="UP000000645">
    <property type="component" value="Chromosome"/>
</dbReference>
<dbReference type="GO" id="GO:0004324">
    <property type="term" value="F:ferredoxin-NADP+ reductase activity"/>
    <property type="evidence" value="ECO:0007669"/>
    <property type="project" value="UniProtKB-UniRule"/>
</dbReference>
<dbReference type="GO" id="GO:0050660">
    <property type="term" value="F:flavin adenine dinucleotide binding"/>
    <property type="evidence" value="ECO:0007669"/>
    <property type="project" value="UniProtKB-UniRule"/>
</dbReference>
<dbReference type="GO" id="GO:0050661">
    <property type="term" value="F:NADP binding"/>
    <property type="evidence" value="ECO:0007669"/>
    <property type="project" value="UniProtKB-UniRule"/>
</dbReference>
<dbReference type="Gene3D" id="3.50.50.60">
    <property type="entry name" value="FAD/NAD(P)-binding domain"/>
    <property type="match status" value="2"/>
</dbReference>
<dbReference type="HAMAP" id="MF_01685">
    <property type="entry name" value="FENR2"/>
    <property type="match status" value="1"/>
</dbReference>
<dbReference type="InterPro" id="IPR036188">
    <property type="entry name" value="FAD/NAD-bd_sf"/>
</dbReference>
<dbReference type="InterPro" id="IPR023753">
    <property type="entry name" value="FAD/NAD-binding_dom"/>
</dbReference>
<dbReference type="InterPro" id="IPR022890">
    <property type="entry name" value="Fd--NADP_Rdtase_type_2"/>
</dbReference>
<dbReference type="InterPro" id="IPR050097">
    <property type="entry name" value="Ferredoxin-NADP_redctase_2"/>
</dbReference>
<dbReference type="PANTHER" id="PTHR48105">
    <property type="entry name" value="THIOREDOXIN REDUCTASE 1-RELATED-RELATED"/>
    <property type="match status" value="1"/>
</dbReference>
<dbReference type="Pfam" id="PF07992">
    <property type="entry name" value="Pyr_redox_2"/>
    <property type="match status" value="1"/>
</dbReference>
<dbReference type="PRINTS" id="PR00368">
    <property type="entry name" value="FADPNR"/>
</dbReference>
<dbReference type="PRINTS" id="PR00411">
    <property type="entry name" value="PNDRDTASEI"/>
</dbReference>
<dbReference type="SUPFAM" id="SSF51905">
    <property type="entry name" value="FAD/NAD(P)-binding domain"/>
    <property type="match status" value="2"/>
</dbReference>
<protein>
    <recommendedName>
        <fullName evidence="1">Ferredoxin--NADP reductase</fullName>
        <shortName evidence="1">FNR</shortName>
        <shortName evidence="1">Fd-NADP(+) reductase</shortName>
        <ecNumber evidence="1">1.18.1.2</ecNumber>
    </recommendedName>
</protein>
<name>FENR_ACISJ</name>
<feature type="chain" id="PRO_0000364781" description="Ferredoxin--NADP reductase">
    <location>
        <begin position="1"/>
        <end position="354"/>
    </location>
</feature>
<feature type="binding site" evidence="1">
    <location>
        <position position="42"/>
    </location>
    <ligand>
        <name>FAD</name>
        <dbReference type="ChEBI" id="CHEBI:57692"/>
    </ligand>
</feature>
<feature type="binding site" evidence="1">
    <location>
        <position position="50"/>
    </location>
    <ligand>
        <name>FAD</name>
        <dbReference type="ChEBI" id="CHEBI:57692"/>
    </ligand>
</feature>
<feature type="binding site" evidence="1">
    <location>
        <position position="55"/>
    </location>
    <ligand>
        <name>FAD</name>
        <dbReference type="ChEBI" id="CHEBI:57692"/>
    </ligand>
</feature>
<feature type="binding site" evidence="1">
    <location>
        <position position="95"/>
    </location>
    <ligand>
        <name>FAD</name>
        <dbReference type="ChEBI" id="CHEBI:57692"/>
    </ligand>
</feature>
<feature type="binding site" evidence="1">
    <location>
        <position position="130"/>
    </location>
    <ligand>
        <name>FAD</name>
        <dbReference type="ChEBI" id="CHEBI:57692"/>
    </ligand>
</feature>
<feature type="binding site" evidence="1">
    <location>
        <position position="299"/>
    </location>
    <ligand>
        <name>FAD</name>
        <dbReference type="ChEBI" id="CHEBI:57692"/>
    </ligand>
</feature>
<feature type="binding site" evidence="1">
    <location>
        <position position="339"/>
    </location>
    <ligand>
        <name>FAD</name>
        <dbReference type="ChEBI" id="CHEBI:57692"/>
    </ligand>
</feature>